<reference key="1">
    <citation type="journal article" date="2006" name="Proc. Natl. Acad. Sci. U.S.A.">
        <title>Identification of genes subject to positive selection in uropathogenic strains of Escherichia coli: a comparative genomics approach.</title>
        <authorList>
            <person name="Chen S.L."/>
            <person name="Hung C.-S."/>
            <person name="Xu J."/>
            <person name="Reigstad C.S."/>
            <person name="Magrini V."/>
            <person name="Sabo A."/>
            <person name="Blasiar D."/>
            <person name="Bieri T."/>
            <person name="Meyer R.R."/>
            <person name="Ozersky P."/>
            <person name="Armstrong J.R."/>
            <person name="Fulton R.S."/>
            <person name="Latreille J.P."/>
            <person name="Spieth J."/>
            <person name="Hooton T.M."/>
            <person name="Mardis E.R."/>
            <person name="Hultgren S.J."/>
            <person name="Gordon J.I."/>
        </authorList>
    </citation>
    <scope>NUCLEOTIDE SEQUENCE [LARGE SCALE GENOMIC DNA]</scope>
    <source>
        <strain>UTI89 / UPEC</strain>
    </source>
</reference>
<organism>
    <name type="scientific">Escherichia coli (strain UTI89 / UPEC)</name>
    <dbReference type="NCBI Taxonomy" id="364106"/>
    <lineage>
        <taxon>Bacteria</taxon>
        <taxon>Pseudomonadati</taxon>
        <taxon>Pseudomonadota</taxon>
        <taxon>Gammaproteobacteria</taxon>
        <taxon>Enterobacterales</taxon>
        <taxon>Enterobacteriaceae</taxon>
        <taxon>Escherichia</taxon>
    </lineage>
</organism>
<gene>
    <name evidence="1" type="primary">aat</name>
    <name type="ordered locus">UTI89_C0900</name>
</gene>
<protein>
    <recommendedName>
        <fullName evidence="1">Leucyl/phenylalanyl-tRNA--protein transferase</fullName>
        <ecNumber evidence="1">2.3.2.6</ecNumber>
    </recommendedName>
    <alternativeName>
        <fullName evidence="1">L/F-transferase</fullName>
    </alternativeName>
    <alternativeName>
        <fullName evidence="1">Leucyltransferase</fullName>
    </alternativeName>
    <alternativeName>
        <fullName evidence="1">Phenyalanyltransferase</fullName>
    </alternativeName>
</protein>
<dbReference type="EC" id="2.3.2.6" evidence="1"/>
<dbReference type="EMBL" id="CP000243">
    <property type="protein sequence ID" value="ABE06385.1"/>
    <property type="molecule type" value="Genomic_DNA"/>
</dbReference>
<dbReference type="RefSeq" id="WP_001241673.1">
    <property type="nucleotide sequence ID" value="NZ_CP064825.1"/>
</dbReference>
<dbReference type="SMR" id="Q1RE29"/>
<dbReference type="KEGG" id="eci:UTI89_C0900"/>
<dbReference type="HOGENOM" id="CLU_075045_0_0_6"/>
<dbReference type="Proteomes" id="UP000001952">
    <property type="component" value="Chromosome"/>
</dbReference>
<dbReference type="GO" id="GO:0005737">
    <property type="term" value="C:cytoplasm"/>
    <property type="evidence" value="ECO:0007669"/>
    <property type="project" value="UniProtKB-SubCell"/>
</dbReference>
<dbReference type="GO" id="GO:0008914">
    <property type="term" value="F:leucyl-tRNA--protein transferase activity"/>
    <property type="evidence" value="ECO:0007669"/>
    <property type="project" value="UniProtKB-UniRule"/>
</dbReference>
<dbReference type="GO" id="GO:0030163">
    <property type="term" value="P:protein catabolic process"/>
    <property type="evidence" value="ECO:0007669"/>
    <property type="project" value="UniProtKB-UniRule"/>
</dbReference>
<dbReference type="FunFam" id="3.30.70.3550:FF:000001">
    <property type="entry name" value="Leucyl/phenylalanyl-tRNA--protein transferase"/>
    <property type="match status" value="1"/>
</dbReference>
<dbReference type="FunFam" id="3.40.630.70:FF:000001">
    <property type="entry name" value="Leucyl/phenylalanyl-tRNA--protein transferase"/>
    <property type="match status" value="1"/>
</dbReference>
<dbReference type="Gene3D" id="3.40.630.70">
    <property type="entry name" value="Leucyl/phenylalanyl-tRNA-protein transferase, C-terminal domain"/>
    <property type="match status" value="1"/>
</dbReference>
<dbReference type="Gene3D" id="3.30.70.3550">
    <property type="entry name" value="Leucyl/phenylalanyl-tRNA-protein transferase, N-terminal domain"/>
    <property type="match status" value="1"/>
</dbReference>
<dbReference type="HAMAP" id="MF_00688">
    <property type="entry name" value="Leu_Phe_trans"/>
    <property type="match status" value="1"/>
</dbReference>
<dbReference type="InterPro" id="IPR016181">
    <property type="entry name" value="Acyl_CoA_acyltransferase"/>
</dbReference>
<dbReference type="InterPro" id="IPR004616">
    <property type="entry name" value="Leu/Phe-tRNA_Trfase"/>
</dbReference>
<dbReference type="InterPro" id="IPR042203">
    <property type="entry name" value="Leu/Phe-tRNA_Trfase_C"/>
</dbReference>
<dbReference type="InterPro" id="IPR042221">
    <property type="entry name" value="Leu/Phe-tRNA_Trfase_N"/>
</dbReference>
<dbReference type="NCBIfam" id="TIGR00667">
    <property type="entry name" value="aat"/>
    <property type="match status" value="1"/>
</dbReference>
<dbReference type="PANTHER" id="PTHR30098">
    <property type="entry name" value="LEUCYL/PHENYLALANYL-TRNA--PROTEIN TRANSFERASE"/>
    <property type="match status" value="1"/>
</dbReference>
<dbReference type="PANTHER" id="PTHR30098:SF2">
    <property type="entry name" value="LEUCYL_PHENYLALANYL-TRNA--PROTEIN TRANSFERASE"/>
    <property type="match status" value="1"/>
</dbReference>
<dbReference type="Pfam" id="PF03588">
    <property type="entry name" value="Leu_Phe_trans"/>
    <property type="match status" value="1"/>
</dbReference>
<dbReference type="SUPFAM" id="SSF55729">
    <property type="entry name" value="Acyl-CoA N-acyltransferases (Nat)"/>
    <property type="match status" value="1"/>
</dbReference>
<comment type="function">
    <text evidence="1">Functions in the N-end rule pathway of protein degradation where it conjugates Leu, Phe and, less efficiently, Met from aminoacyl-tRNAs to the N-termini of proteins containing an N-terminal arginine or lysine.</text>
</comment>
<comment type="catalytic activity">
    <reaction evidence="1">
        <text>N-terminal L-lysyl-[protein] + L-leucyl-tRNA(Leu) = N-terminal L-leucyl-L-lysyl-[protein] + tRNA(Leu) + H(+)</text>
        <dbReference type="Rhea" id="RHEA:12340"/>
        <dbReference type="Rhea" id="RHEA-COMP:9613"/>
        <dbReference type="Rhea" id="RHEA-COMP:9622"/>
        <dbReference type="Rhea" id="RHEA-COMP:12670"/>
        <dbReference type="Rhea" id="RHEA-COMP:12671"/>
        <dbReference type="ChEBI" id="CHEBI:15378"/>
        <dbReference type="ChEBI" id="CHEBI:65249"/>
        <dbReference type="ChEBI" id="CHEBI:78442"/>
        <dbReference type="ChEBI" id="CHEBI:78494"/>
        <dbReference type="ChEBI" id="CHEBI:133043"/>
        <dbReference type="EC" id="2.3.2.6"/>
    </reaction>
</comment>
<comment type="catalytic activity">
    <reaction evidence="1">
        <text>N-terminal L-arginyl-[protein] + L-leucyl-tRNA(Leu) = N-terminal L-leucyl-L-arginyl-[protein] + tRNA(Leu) + H(+)</text>
        <dbReference type="Rhea" id="RHEA:50416"/>
        <dbReference type="Rhea" id="RHEA-COMP:9613"/>
        <dbReference type="Rhea" id="RHEA-COMP:9622"/>
        <dbReference type="Rhea" id="RHEA-COMP:12672"/>
        <dbReference type="Rhea" id="RHEA-COMP:12673"/>
        <dbReference type="ChEBI" id="CHEBI:15378"/>
        <dbReference type="ChEBI" id="CHEBI:64719"/>
        <dbReference type="ChEBI" id="CHEBI:78442"/>
        <dbReference type="ChEBI" id="CHEBI:78494"/>
        <dbReference type="ChEBI" id="CHEBI:133044"/>
        <dbReference type="EC" id="2.3.2.6"/>
    </reaction>
</comment>
<comment type="catalytic activity">
    <reaction evidence="1">
        <text>L-phenylalanyl-tRNA(Phe) + an N-terminal L-alpha-aminoacyl-[protein] = an N-terminal L-phenylalanyl-L-alpha-aminoacyl-[protein] + tRNA(Phe)</text>
        <dbReference type="Rhea" id="RHEA:43632"/>
        <dbReference type="Rhea" id="RHEA-COMP:9668"/>
        <dbReference type="Rhea" id="RHEA-COMP:9699"/>
        <dbReference type="Rhea" id="RHEA-COMP:10636"/>
        <dbReference type="Rhea" id="RHEA-COMP:10637"/>
        <dbReference type="ChEBI" id="CHEBI:78442"/>
        <dbReference type="ChEBI" id="CHEBI:78531"/>
        <dbReference type="ChEBI" id="CHEBI:78597"/>
        <dbReference type="ChEBI" id="CHEBI:83561"/>
        <dbReference type="EC" id="2.3.2.6"/>
    </reaction>
</comment>
<comment type="subcellular location">
    <subcellularLocation>
        <location evidence="1">Cytoplasm</location>
    </subcellularLocation>
</comment>
<comment type="similarity">
    <text evidence="1">Belongs to the L/F-transferase family.</text>
</comment>
<proteinExistence type="inferred from homology"/>
<name>LFTR_ECOUT</name>
<accession>Q1RE29</accession>
<keyword id="KW-0012">Acyltransferase</keyword>
<keyword id="KW-0963">Cytoplasm</keyword>
<keyword id="KW-0808">Transferase</keyword>
<sequence>MRLVQLSRHSIAFPSPEGALREPNGLLALGGDLSPARLLMAYQRGIFPWFSPGDPILWWSPDPRAVLWPESLHISRSMKRFHKRSPYRVTMNYAFGQVIEGCASDREEGTWITRGVVEAYHRLHELGHAHSIEVWREDELVGGMYGVAQGTLFCGESMFSRMENASKTALLVFCDEFIRHGGKLIDCQVLNDHTASLGACEIPRRDYLNYLNQMRLGRLPNNFWVPRCLFSPQE</sequence>
<feature type="chain" id="PRO_0000258058" description="Leucyl/phenylalanyl-tRNA--protein transferase">
    <location>
        <begin position="1"/>
        <end position="234"/>
    </location>
</feature>
<evidence type="ECO:0000255" key="1">
    <source>
        <dbReference type="HAMAP-Rule" id="MF_00688"/>
    </source>
</evidence>